<protein>
    <recommendedName>
        <fullName evidence="1">Uridylate kinase</fullName>
        <shortName evidence="1">UK</shortName>
        <ecNumber evidence="1">2.7.4.22</ecNumber>
    </recommendedName>
    <alternativeName>
        <fullName evidence="1">Uridine monophosphate kinase</fullName>
        <shortName evidence="1">UMP kinase</shortName>
        <shortName evidence="1">UMPK</shortName>
    </alternativeName>
</protein>
<evidence type="ECO:0000255" key="1">
    <source>
        <dbReference type="HAMAP-Rule" id="MF_01220"/>
    </source>
</evidence>
<gene>
    <name evidence="1" type="primary">pyrH</name>
    <name type="ordered locus">Mboo_0760</name>
</gene>
<sequence>MKTVVLSLGGSILIPELAKNRISAYLPVLKEIAGQHRVFVVVGGGGGARDYIAVARKLGIDEGTSDEIGILVTRLNATLLIAALGDAAYPKVAESHSEAKKFGESKKIVVMGGITPGQTTDAVAAVLAERVQADVFVNVTSVNGIYDKDPKSHPAAQHHATLTPKQLLSIVSQGGLGAGSHNVLDIIAARIVERSSIPLVVLDGTRPKNLSDVLLRGKGEYSVVSSTKKKVLPL</sequence>
<keyword id="KW-0067">ATP-binding</keyword>
<keyword id="KW-0963">Cytoplasm</keyword>
<keyword id="KW-0418">Kinase</keyword>
<keyword id="KW-0547">Nucleotide-binding</keyword>
<keyword id="KW-0665">Pyrimidine biosynthesis</keyword>
<keyword id="KW-1185">Reference proteome</keyword>
<keyword id="KW-0808">Transferase</keyword>
<proteinExistence type="inferred from homology"/>
<organism>
    <name type="scientific">Methanoregula boonei (strain DSM 21154 / JCM 14090 / 6A8)</name>
    <dbReference type="NCBI Taxonomy" id="456442"/>
    <lineage>
        <taxon>Archaea</taxon>
        <taxon>Methanobacteriati</taxon>
        <taxon>Methanobacteriota</taxon>
        <taxon>Stenosarchaea group</taxon>
        <taxon>Methanomicrobia</taxon>
        <taxon>Methanomicrobiales</taxon>
        <taxon>Methanoregulaceae</taxon>
        <taxon>Methanoregula</taxon>
    </lineage>
</organism>
<comment type="function">
    <text evidence="1">Catalyzes the reversible phosphorylation of UMP to UDP.</text>
</comment>
<comment type="catalytic activity">
    <reaction evidence="1">
        <text>UMP + ATP = UDP + ADP</text>
        <dbReference type="Rhea" id="RHEA:24400"/>
        <dbReference type="ChEBI" id="CHEBI:30616"/>
        <dbReference type="ChEBI" id="CHEBI:57865"/>
        <dbReference type="ChEBI" id="CHEBI:58223"/>
        <dbReference type="ChEBI" id="CHEBI:456216"/>
        <dbReference type="EC" id="2.7.4.22"/>
    </reaction>
</comment>
<comment type="activity regulation">
    <text evidence="1">Inhibited by UTP.</text>
</comment>
<comment type="pathway">
    <text evidence="1">Pyrimidine metabolism; CTP biosynthesis via de novo pathway; UDP from UMP (UMPK route): step 1/1.</text>
</comment>
<comment type="subunit">
    <text evidence="1">Homohexamer.</text>
</comment>
<comment type="subcellular location">
    <subcellularLocation>
        <location evidence="1">Cytoplasm</location>
    </subcellularLocation>
</comment>
<comment type="similarity">
    <text evidence="1">Belongs to the UMP kinase family.</text>
</comment>
<accession>A7I6B7</accession>
<dbReference type="EC" id="2.7.4.22" evidence="1"/>
<dbReference type="EMBL" id="CP000780">
    <property type="protein sequence ID" value="ABS55278.1"/>
    <property type="molecule type" value="Genomic_DNA"/>
</dbReference>
<dbReference type="RefSeq" id="WP_012106301.1">
    <property type="nucleotide sequence ID" value="NC_009712.1"/>
</dbReference>
<dbReference type="SMR" id="A7I6B7"/>
<dbReference type="STRING" id="456442.Mboo_0760"/>
<dbReference type="GeneID" id="5411143"/>
<dbReference type="KEGG" id="mbn:Mboo_0760"/>
<dbReference type="eggNOG" id="arCOG00858">
    <property type="taxonomic scope" value="Archaea"/>
</dbReference>
<dbReference type="HOGENOM" id="CLU_079546_0_0_2"/>
<dbReference type="OrthoDB" id="372251at2157"/>
<dbReference type="UniPathway" id="UPA00159">
    <property type="reaction ID" value="UER00275"/>
</dbReference>
<dbReference type="Proteomes" id="UP000002408">
    <property type="component" value="Chromosome"/>
</dbReference>
<dbReference type="GO" id="GO:0005737">
    <property type="term" value="C:cytoplasm"/>
    <property type="evidence" value="ECO:0007669"/>
    <property type="project" value="UniProtKB-SubCell"/>
</dbReference>
<dbReference type="GO" id="GO:0005524">
    <property type="term" value="F:ATP binding"/>
    <property type="evidence" value="ECO:0007669"/>
    <property type="project" value="UniProtKB-KW"/>
</dbReference>
<dbReference type="GO" id="GO:0033862">
    <property type="term" value="F:UMP kinase activity"/>
    <property type="evidence" value="ECO:0007669"/>
    <property type="project" value="UniProtKB-EC"/>
</dbReference>
<dbReference type="GO" id="GO:0044210">
    <property type="term" value="P:'de novo' CTP biosynthetic process"/>
    <property type="evidence" value="ECO:0007669"/>
    <property type="project" value="UniProtKB-UniRule"/>
</dbReference>
<dbReference type="GO" id="GO:0006225">
    <property type="term" value="P:UDP biosynthetic process"/>
    <property type="evidence" value="ECO:0007669"/>
    <property type="project" value="TreeGrafter"/>
</dbReference>
<dbReference type="Gene3D" id="3.40.1160.10">
    <property type="entry name" value="Acetylglutamate kinase-like"/>
    <property type="match status" value="1"/>
</dbReference>
<dbReference type="HAMAP" id="MF_01220_A">
    <property type="entry name" value="PyrH_A"/>
    <property type="match status" value="1"/>
</dbReference>
<dbReference type="InterPro" id="IPR036393">
    <property type="entry name" value="AceGlu_kinase-like_sf"/>
</dbReference>
<dbReference type="InterPro" id="IPR001048">
    <property type="entry name" value="Asp/Glu/Uridylate_kinase"/>
</dbReference>
<dbReference type="InterPro" id="IPR011817">
    <property type="entry name" value="Uridylate_kinase"/>
</dbReference>
<dbReference type="InterPro" id="IPR011818">
    <property type="entry name" value="Uridylate_kinase_arch/spir"/>
</dbReference>
<dbReference type="NCBIfam" id="TIGR02076">
    <property type="entry name" value="pyrH_arch"/>
    <property type="match status" value="1"/>
</dbReference>
<dbReference type="PANTHER" id="PTHR42833">
    <property type="entry name" value="URIDYLATE KINASE"/>
    <property type="match status" value="1"/>
</dbReference>
<dbReference type="PANTHER" id="PTHR42833:SF4">
    <property type="entry name" value="URIDYLATE KINASE PUMPKIN, CHLOROPLASTIC"/>
    <property type="match status" value="1"/>
</dbReference>
<dbReference type="Pfam" id="PF00696">
    <property type="entry name" value="AA_kinase"/>
    <property type="match status" value="1"/>
</dbReference>
<dbReference type="PIRSF" id="PIRSF005650">
    <property type="entry name" value="Uridylate_kin"/>
    <property type="match status" value="1"/>
</dbReference>
<dbReference type="SUPFAM" id="SSF53633">
    <property type="entry name" value="Carbamate kinase-like"/>
    <property type="match status" value="1"/>
</dbReference>
<reference key="1">
    <citation type="journal article" date="2015" name="Microbiology">
        <title>Genome of Methanoregula boonei 6A8 reveals adaptations to oligotrophic peatland environments.</title>
        <authorList>
            <person name="Braeuer S."/>
            <person name="Cadillo-Quiroz H."/>
            <person name="Kyrpides N."/>
            <person name="Woyke T."/>
            <person name="Goodwin L."/>
            <person name="Detter C."/>
            <person name="Podell S."/>
            <person name="Yavitt J.B."/>
            <person name="Zinder S.H."/>
        </authorList>
    </citation>
    <scope>NUCLEOTIDE SEQUENCE [LARGE SCALE GENOMIC DNA]</scope>
    <source>
        <strain>DSM 21154 / JCM 14090 / 6A8</strain>
    </source>
</reference>
<name>PYRH_METB6</name>
<feature type="chain" id="PRO_0000323992" description="Uridylate kinase">
    <location>
        <begin position="1"/>
        <end position="234"/>
    </location>
</feature>
<feature type="binding site" evidence="1">
    <location>
        <begin position="10"/>
        <end position="11"/>
    </location>
    <ligand>
        <name>ATP</name>
        <dbReference type="ChEBI" id="CHEBI:30616"/>
    </ligand>
</feature>
<feature type="binding site" evidence="1">
    <location>
        <position position="44"/>
    </location>
    <ligand>
        <name>UMP</name>
        <dbReference type="ChEBI" id="CHEBI:57865"/>
    </ligand>
</feature>
<feature type="binding site" evidence="1">
    <location>
        <position position="45"/>
    </location>
    <ligand>
        <name>ATP</name>
        <dbReference type="ChEBI" id="CHEBI:30616"/>
    </ligand>
</feature>
<feature type="binding site" evidence="1">
    <location>
        <position position="49"/>
    </location>
    <ligand>
        <name>ATP</name>
        <dbReference type="ChEBI" id="CHEBI:30616"/>
    </ligand>
</feature>
<feature type="binding site" evidence="1">
    <location>
        <position position="66"/>
    </location>
    <ligand>
        <name>UMP</name>
        <dbReference type="ChEBI" id="CHEBI:57865"/>
    </ligand>
</feature>
<feature type="binding site" evidence="1">
    <location>
        <begin position="114"/>
        <end position="120"/>
    </location>
    <ligand>
        <name>UMP</name>
        <dbReference type="ChEBI" id="CHEBI:57865"/>
    </ligand>
</feature>
<feature type="binding site" evidence="1">
    <location>
        <position position="140"/>
    </location>
    <ligand>
        <name>ATP</name>
        <dbReference type="ChEBI" id="CHEBI:30616"/>
    </ligand>
</feature>
<feature type="binding site" evidence="1">
    <location>
        <position position="146"/>
    </location>
    <ligand>
        <name>ATP</name>
        <dbReference type="ChEBI" id="CHEBI:30616"/>
    </ligand>
</feature>
<feature type="binding site" evidence="1">
    <location>
        <position position="149"/>
    </location>
    <ligand>
        <name>ATP</name>
        <dbReference type="ChEBI" id="CHEBI:30616"/>
    </ligand>
</feature>